<evidence type="ECO:0000255" key="1">
    <source>
        <dbReference type="HAMAP-Rule" id="MF_00333"/>
    </source>
</evidence>
<organism>
    <name type="scientific">Shewanella denitrificans (strain OS217 / ATCC BAA-1090 / DSM 15013)</name>
    <dbReference type="NCBI Taxonomy" id="318161"/>
    <lineage>
        <taxon>Bacteria</taxon>
        <taxon>Pseudomonadati</taxon>
        <taxon>Pseudomonadota</taxon>
        <taxon>Gammaproteobacteria</taxon>
        <taxon>Alteromonadales</taxon>
        <taxon>Shewanellaceae</taxon>
        <taxon>Shewanella</taxon>
    </lineage>
</organism>
<keyword id="KW-0963">Cytoplasm</keyword>
<keyword id="KW-0350">Heme biosynthesis</keyword>
<keyword id="KW-0479">Metal-binding</keyword>
<keyword id="KW-0560">Oxidoreductase</keyword>
<keyword id="KW-0627">Porphyrin biosynthesis</keyword>
<keyword id="KW-1185">Reference proteome</keyword>
<gene>
    <name evidence="1" type="primary">hemF</name>
    <name type="ordered locus">Sden_0030</name>
</gene>
<sequence>MTGPDTHAVKQFLLALQTNICAELEQLDGEASFKAESWQRAEGGGGTSRVLTQGKLFEQAGVNFSHVKGAAMPASATAHRPELAGRSFEAMGVSLVIHPNNPYIPTTHANVRFFIASKEGADPVWWFGGGFDLTPYYPFKEDVLSWHQTAADLCAPFGEEVYPKYKKWCDDYFFLPHRNETRGVGGLFFDDLNQAGFEQSFAFMRAVGEGFIQAYAPIVERRKALSFGEHERQFQLYRRGRYVEFNLVYDRGTLFGLQTGGRTESILMSMPPLVRWEYGFTPAAGSVEAELYEVYLKPQDWLQQA</sequence>
<proteinExistence type="inferred from homology"/>
<reference key="1">
    <citation type="submission" date="2006-03" db="EMBL/GenBank/DDBJ databases">
        <title>Complete sequence of Shewanella denitrificans OS217.</title>
        <authorList>
            <consortium name="US DOE Joint Genome Institute"/>
            <person name="Copeland A."/>
            <person name="Lucas S."/>
            <person name="Lapidus A."/>
            <person name="Barry K."/>
            <person name="Detter J.C."/>
            <person name="Glavina del Rio T."/>
            <person name="Hammon N."/>
            <person name="Israni S."/>
            <person name="Dalin E."/>
            <person name="Tice H."/>
            <person name="Pitluck S."/>
            <person name="Brettin T."/>
            <person name="Bruce D."/>
            <person name="Han C."/>
            <person name="Tapia R."/>
            <person name="Gilna P."/>
            <person name="Kiss H."/>
            <person name="Schmutz J."/>
            <person name="Larimer F."/>
            <person name="Land M."/>
            <person name="Hauser L."/>
            <person name="Kyrpides N."/>
            <person name="Lykidis A."/>
            <person name="Richardson P."/>
        </authorList>
    </citation>
    <scope>NUCLEOTIDE SEQUENCE [LARGE SCALE GENOMIC DNA]</scope>
    <source>
        <strain>OS217 / ATCC BAA-1090 / DSM 15013</strain>
    </source>
</reference>
<comment type="function">
    <text evidence="1">Involved in the heme biosynthesis. Catalyzes the aerobic oxidative decarboxylation of propionate groups of rings A and B of coproporphyrinogen-III to yield the vinyl groups in protoporphyrinogen-IX.</text>
</comment>
<comment type="catalytic activity">
    <reaction evidence="1">
        <text>coproporphyrinogen III + O2 + 2 H(+) = protoporphyrinogen IX + 2 CO2 + 2 H2O</text>
        <dbReference type="Rhea" id="RHEA:18257"/>
        <dbReference type="ChEBI" id="CHEBI:15377"/>
        <dbReference type="ChEBI" id="CHEBI:15378"/>
        <dbReference type="ChEBI" id="CHEBI:15379"/>
        <dbReference type="ChEBI" id="CHEBI:16526"/>
        <dbReference type="ChEBI" id="CHEBI:57307"/>
        <dbReference type="ChEBI" id="CHEBI:57309"/>
        <dbReference type="EC" id="1.3.3.3"/>
    </reaction>
</comment>
<comment type="cofactor">
    <cofactor evidence="1">
        <name>a divalent metal cation</name>
        <dbReference type="ChEBI" id="CHEBI:60240"/>
    </cofactor>
</comment>
<comment type="pathway">
    <text evidence="1">Porphyrin-containing compound metabolism; protoporphyrin-IX biosynthesis; protoporphyrinogen-IX from coproporphyrinogen-III (O2 route): step 1/1.</text>
</comment>
<comment type="subunit">
    <text evidence="1">Homodimer.</text>
</comment>
<comment type="subcellular location">
    <subcellularLocation>
        <location evidence="1">Cytoplasm</location>
    </subcellularLocation>
</comment>
<comment type="similarity">
    <text evidence="1">Belongs to the aerobic coproporphyrinogen-III oxidase family.</text>
</comment>
<feature type="chain" id="PRO_1000019499" description="Oxygen-dependent coproporphyrinogen-III oxidase">
    <location>
        <begin position="1"/>
        <end position="305"/>
    </location>
</feature>
<feature type="region of interest" description="Important for dimerization" evidence="1">
    <location>
        <begin position="242"/>
        <end position="277"/>
    </location>
</feature>
<feature type="active site" description="Proton donor" evidence="1">
    <location>
        <position position="108"/>
    </location>
</feature>
<feature type="binding site" evidence="1">
    <location>
        <position position="94"/>
    </location>
    <ligand>
        <name>substrate</name>
    </ligand>
</feature>
<feature type="binding site" evidence="1">
    <location>
        <position position="98"/>
    </location>
    <ligand>
        <name>a divalent metal cation</name>
        <dbReference type="ChEBI" id="CHEBI:60240"/>
    </ligand>
</feature>
<feature type="binding site" evidence="1">
    <location>
        <position position="108"/>
    </location>
    <ligand>
        <name>a divalent metal cation</name>
        <dbReference type="ChEBI" id="CHEBI:60240"/>
    </ligand>
</feature>
<feature type="binding site" evidence="1">
    <location>
        <begin position="110"/>
        <end position="112"/>
    </location>
    <ligand>
        <name>substrate</name>
    </ligand>
</feature>
<feature type="binding site" evidence="1">
    <location>
        <position position="147"/>
    </location>
    <ligand>
        <name>a divalent metal cation</name>
        <dbReference type="ChEBI" id="CHEBI:60240"/>
    </ligand>
</feature>
<feature type="binding site" evidence="1">
    <location>
        <position position="177"/>
    </location>
    <ligand>
        <name>a divalent metal cation</name>
        <dbReference type="ChEBI" id="CHEBI:60240"/>
    </ligand>
</feature>
<feature type="binding site" evidence="1">
    <location>
        <begin position="260"/>
        <end position="262"/>
    </location>
    <ligand>
        <name>substrate</name>
    </ligand>
</feature>
<feature type="site" description="Important for dimerization" evidence="1">
    <location>
        <position position="177"/>
    </location>
</feature>
<accession>Q12T99</accession>
<protein>
    <recommendedName>
        <fullName evidence="1">Oxygen-dependent coproporphyrinogen-III oxidase</fullName>
        <shortName evidence="1">CPO</shortName>
        <shortName evidence="1">Coprogen oxidase</shortName>
        <shortName evidence="1">Coproporphyrinogenase</shortName>
        <ecNumber evidence="1">1.3.3.3</ecNumber>
    </recommendedName>
</protein>
<dbReference type="EC" id="1.3.3.3" evidence="1"/>
<dbReference type="EMBL" id="CP000302">
    <property type="protein sequence ID" value="ABE53327.1"/>
    <property type="molecule type" value="Genomic_DNA"/>
</dbReference>
<dbReference type="RefSeq" id="WP_011494496.1">
    <property type="nucleotide sequence ID" value="NC_007954.1"/>
</dbReference>
<dbReference type="SMR" id="Q12T99"/>
<dbReference type="STRING" id="318161.Sden_0030"/>
<dbReference type="KEGG" id="sdn:Sden_0030"/>
<dbReference type="eggNOG" id="COG0408">
    <property type="taxonomic scope" value="Bacteria"/>
</dbReference>
<dbReference type="HOGENOM" id="CLU_026169_0_1_6"/>
<dbReference type="OrthoDB" id="9777553at2"/>
<dbReference type="UniPathway" id="UPA00251">
    <property type="reaction ID" value="UER00322"/>
</dbReference>
<dbReference type="Proteomes" id="UP000001982">
    <property type="component" value="Chromosome"/>
</dbReference>
<dbReference type="GO" id="GO:0005737">
    <property type="term" value="C:cytoplasm"/>
    <property type="evidence" value="ECO:0007669"/>
    <property type="project" value="UniProtKB-SubCell"/>
</dbReference>
<dbReference type="GO" id="GO:0004109">
    <property type="term" value="F:coproporphyrinogen oxidase activity"/>
    <property type="evidence" value="ECO:0007669"/>
    <property type="project" value="UniProtKB-UniRule"/>
</dbReference>
<dbReference type="GO" id="GO:0046872">
    <property type="term" value="F:metal ion binding"/>
    <property type="evidence" value="ECO:0007669"/>
    <property type="project" value="UniProtKB-KW"/>
</dbReference>
<dbReference type="GO" id="GO:0042803">
    <property type="term" value="F:protein homodimerization activity"/>
    <property type="evidence" value="ECO:0000250"/>
    <property type="project" value="UniProtKB"/>
</dbReference>
<dbReference type="GO" id="GO:0006782">
    <property type="term" value="P:protoporphyrinogen IX biosynthetic process"/>
    <property type="evidence" value="ECO:0007669"/>
    <property type="project" value="UniProtKB-UniRule"/>
</dbReference>
<dbReference type="FunFam" id="3.40.1500.10:FF:000001">
    <property type="entry name" value="Oxygen-dependent coproporphyrinogen-III oxidase"/>
    <property type="match status" value="1"/>
</dbReference>
<dbReference type="Gene3D" id="3.40.1500.10">
    <property type="entry name" value="Coproporphyrinogen III oxidase, aerobic"/>
    <property type="match status" value="1"/>
</dbReference>
<dbReference type="HAMAP" id="MF_00333">
    <property type="entry name" value="Coprogen_oxidas"/>
    <property type="match status" value="1"/>
</dbReference>
<dbReference type="InterPro" id="IPR001260">
    <property type="entry name" value="Coprogen_oxidase_aer"/>
</dbReference>
<dbReference type="InterPro" id="IPR036406">
    <property type="entry name" value="Coprogen_oxidase_aer_sf"/>
</dbReference>
<dbReference type="InterPro" id="IPR018375">
    <property type="entry name" value="Coprogen_oxidase_CS"/>
</dbReference>
<dbReference type="NCBIfam" id="NF003727">
    <property type="entry name" value="PRK05330.1"/>
    <property type="match status" value="1"/>
</dbReference>
<dbReference type="PANTHER" id="PTHR10755">
    <property type="entry name" value="COPROPORPHYRINOGEN III OXIDASE, MITOCHONDRIAL"/>
    <property type="match status" value="1"/>
</dbReference>
<dbReference type="PANTHER" id="PTHR10755:SF0">
    <property type="entry name" value="OXYGEN-DEPENDENT COPROPORPHYRINOGEN-III OXIDASE, MITOCHONDRIAL"/>
    <property type="match status" value="1"/>
</dbReference>
<dbReference type="Pfam" id="PF01218">
    <property type="entry name" value="Coprogen_oxidas"/>
    <property type="match status" value="1"/>
</dbReference>
<dbReference type="PIRSF" id="PIRSF000166">
    <property type="entry name" value="Coproporphyri_ox"/>
    <property type="match status" value="1"/>
</dbReference>
<dbReference type="PRINTS" id="PR00073">
    <property type="entry name" value="COPRGNOXDASE"/>
</dbReference>
<dbReference type="SUPFAM" id="SSF102886">
    <property type="entry name" value="Coproporphyrinogen III oxidase"/>
    <property type="match status" value="1"/>
</dbReference>
<dbReference type="PROSITE" id="PS01021">
    <property type="entry name" value="COPROGEN_OXIDASE"/>
    <property type="match status" value="1"/>
</dbReference>
<name>HEM6_SHEDO</name>